<evidence type="ECO:0000250" key="1">
    <source>
        <dbReference type="UniProtKB" id="Q9Y263"/>
    </source>
</evidence>
<evidence type="ECO:0000255" key="2">
    <source>
        <dbReference type="PROSITE-ProRule" id="PRU00727"/>
    </source>
</evidence>
<evidence type="ECO:0000255" key="3">
    <source>
        <dbReference type="PROSITE-ProRule" id="PRU00729"/>
    </source>
</evidence>
<evidence type="ECO:0000269" key="4">
    <source>
    </source>
</evidence>
<evidence type="ECO:0000269" key="5">
    <source>
    </source>
</evidence>
<evidence type="ECO:0000269" key="6">
    <source>
    </source>
</evidence>
<evidence type="ECO:0000305" key="7"/>
<evidence type="ECO:0007744" key="8">
    <source>
    </source>
</evidence>
<name>PLAP_MOUSE</name>
<protein>
    <recommendedName>
        <fullName>Phospholipase A-2-activating protein</fullName>
        <shortName>PLA2P</shortName>
        <shortName>PLAP</shortName>
    </recommendedName>
</protein>
<feature type="chain" id="PRO_0000051131" description="Phospholipase A-2-activating protein">
    <location>
        <begin position="1"/>
        <end position="794"/>
    </location>
</feature>
<feature type="repeat" description="WD 1">
    <location>
        <begin position="17"/>
        <end position="56"/>
    </location>
</feature>
<feature type="repeat" description="WD 2">
    <location>
        <begin position="63"/>
        <end position="107"/>
    </location>
</feature>
<feature type="repeat" description="WD 3">
    <location>
        <begin position="110"/>
        <end position="148"/>
    </location>
</feature>
<feature type="repeat" description="WD 4">
    <location>
        <begin position="149"/>
        <end position="188"/>
    </location>
</feature>
<feature type="repeat" description="WD 5">
    <location>
        <begin position="190"/>
        <end position="227"/>
    </location>
</feature>
<feature type="repeat" description="WD 6">
    <location>
        <begin position="229"/>
        <end position="268"/>
    </location>
</feature>
<feature type="repeat" description="WD 7">
    <location>
        <begin position="270"/>
        <end position="307"/>
    </location>
</feature>
<feature type="domain" description="PFU" evidence="2">
    <location>
        <begin position="366"/>
        <end position="465"/>
    </location>
</feature>
<feature type="domain" description="PUL" evidence="3">
    <location>
        <begin position="533"/>
        <end position="793"/>
    </location>
</feature>
<feature type="repeat" description="ARM 1">
    <location>
        <begin position="546"/>
        <end position="588"/>
    </location>
</feature>
<feature type="repeat" description="ARM 2">
    <location>
        <begin position="589"/>
        <end position="620"/>
    </location>
</feature>
<feature type="repeat" description="ARM 3">
    <location>
        <begin position="621"/>
        <end position="668"/>
    </location>
</feature>
<feature type="repeat" description="ARM 4">
    <location>
        <begin position="669"/>
        <end position="714"/>
    </location>
</feature>
<feature type="repeat" description="ARM 5">
    <location>
        <begin position="715"/>
        <end position="754"/>
    </location>
</feature>
<feature type="repeat" description="ARM 6">
    <location>
        <begin position="755"/>
        <end position="794"/>
    </location>
</feature>
<feature type="modified residue" description="Phosphoserine" evidence="1">
    <location>
        <position position="50"/>
    </location>
</feature>
<feature type="modified residue" description="N6-acetyllysine" evidence="8">
    <location>
        <position position="529"/>
    </location>
</feature>
<feature type="mutagenesis site" description="Loss of protein abundance. Increased abundance of ubiquitinated synaptic proteins. Decreased ubiquitin-mediated trafficking of membrane proteins through the endolysosomal pathway. Decreased synaptic vesicle recycling. Decreased cerebellar Purkinje cell migration and dendrite extension." evidence="6">
    <original>G</original>
    <variation>V</variation>
    <location>
        <position position="23"/>
    </location>
</feature>
<feature type="sequence conflict" description="In Ref. 2; AAA39943." evidence="7" ref="2">
    <original>C</original>
    <variation>Y</variation>
    <location>
        <position position="60"/>
    </location>
</feature>
<feature type="sequence conflict" description="In Ref. 2; AAA39943." evidence="7" ref="2">
    <original>C</original>
    <variation>Y</variation>
    <location>
        <position position="70"/>
    </location>
</feature>
<feature type="sequence conflict" description="In Ref. 6." evidence="7" ref="6">
    <original>SE</original>
    <variation>AD</variation>
    <location>
        <begin position="300"/>
        <end position="301"/>
    </location>
</feature>
<feature type="sequence conflict" description="In Ref. 1; BAC36064." evidence="7" ref="1">
    <original>S</original>
    <variation>T</variation>
    <location>
        <position position="528"/>
    </location>
</feature>
<feature type="sequence conflict" description="In Ref. 6." evidence="7" ref="6">
    <original>A</original>
    <variation>T</variation>
    <location>
        <position position="546"/>
    </location>
</feature>
<feature type="sequence conflict" description="In Ref. 6." evidence="7" ref="6">
    <original>A</original>
    <variation>R</variation>
    <location>
        <position position="593"/>
    </location>
</feature>
<dbReference type="EMBL" id="AK075934">
    <property type="protein sequence ID" value="BAC36064.1"/>
    <property type="molecule type" value="mRNA"/>
</dbReference>
<dbReference type="EMBL" id="AL732597">
    <property type="status" value="NOT_ANNOTATED_CDS"/>
    <property type="molecule type" value="Genomic_DNA"/>
</dbReference>
<dbReference type="EMBL" id="CH466527">
    <property type="protein sequence ID" value="EDL30936.1"/>
    <property type="molecule type" value="Genomic_DNA"/>
</dbReference>
<dbReference type="EMBL" id="BC139355">
    <property type="protein sequence ID" value="AAI39356.1"/>
    <property type="molecule type" value="mRNA"/>
</dbReference>
<dbReference type="EMBL" id="BC139356">
    <property type="protein sequence ID" value="AAI39357.1"/>
    <property type="molecule type" value="mRNA"/>
</dbReference>
<dbReference type="EMBL" id="BC139773">
    <property type="protein sequence ID" value="AAI39774.1"/>
    <property type="molecule type" value="mRNA"/>
</dbReference>
<dbReference type="EMBL" id="M57958">
    <property type="protein sequence ID" value="AAA39943.1"/>
    <property type="status" value="ALT_SEQ"/>
    <property type="molecule type" value="mRNA"/>
</dbReference>
<dbReference type="CCDS" id="CCDS18359.1"/>
<dbReference type="PIR" id="A40963">
    <property type="entry name" value="A40963"/>
</dbReference>
<dbReference type="RefSeq" id="NP_766283.2">
    <property type="nucleotide sequence ID" value="NM_172695.3"/>
</dbReference>
<dbReference type="SMR" id="P27612"/>
<dbReference type="BioGRID" id="202224">
    <property type="interactions" value="33"/>
</dbReference>
<dbReference type="CORUM" id="P27612"/>
<dbReference type="FunCoup" id="P27612">
    <property type="interactions" value="4842"/>
</dbReference>
<dbReference type="IntAct" id="P27612">
    <property type="interactions" value="2"/>
</dbReference>
<dbReference type="MINT" id="P27612"/>
<dbReference type="STRING" id="10090.ENSMUSP00000102724"/>
<dbReference type="iPTMnet" id="P27612"/>
<dbReference type="PhosphoSitePlus" id="P27612"/>
<dbReference type="SwissPalm" id="P27612"/>
<dbReference type="jPOST" id="P27612"/>
<dbReference type="PaxDb" id="10090-ENSMUSP00000102724"/>
<dbReference type="PeptideAtlas" id="P27612"/>
<dbReference type="ProteomicsDB" id="289520"/>
<dbReference type="Pumba" id="P27612"/>
<dbReference type="Antibodypedia" id="3560">
    <property type="antibodies" value="446 antibodies from 28 providers"/>
</dbReference>
<dbReference type="DNASU" id="18786"/>
<dbReference type="Ensembl" id="ENSMUST00000107107.9">
    <property type="protein sequence ID" value="ENSMUSP00000102724.3"/>
    <property type="gene ID" value="ENSMUSG00000028577.14"/>
</dbReference>
<dbReference type="GeneID" id="18786"/>
<dbReference type="KEGG" id="mmu:18786"/>
<dbReference type="UCSC" id="uc008tsd.1">
    <property type="organism name" value="mouse"/>
</dbReference>
<dbReference type="AGR" id="MGI:104810"/>
<dbReference type="CTD" id="9373"/>
<dbReference type="MGI" id="MGI:104810">
    <property type="gene designation" value="Plaa"/>
</dbReference>
<dbReference type="VEuPathDB" id="HostDB:ENSMUSG00000028577"/>
<dbReference type="eggNOG" id="KOG0301">
    <property type="taxonomic scope" value="Eukaryota"/>
</dbReference>
<dbReference type="GeneTree" id="ENSGT00550000074944"/>
<dbReference type="HOGENOM" id="CLU_011791_2_0_1"/>
<dbReference type="InParanoid" id="P27612"/>
<dbReference type="OMA" id="DKCIYYW"/>
<dbReference type="OrthoDB" id="10265988at2759"/>
<dbReference type="PhylomeDB" id="P27612"/>
<dbReference type="TreeFam" id="TF105944"/>
<dbReference type="BioGRID-ORCS" id="18786">
    <property type="hits" value="10 hits in 82 CRISPR screens"/>
</dbReference>
<dbReference type="ChiTaRS" id="Plaa">
    <property type="organism name" value="mouse"/>
</dbReference>
<dbReference type="PRO" id="PR:P27612"/>
<dbReference type="Proteomes" id="UP000000589">
    <property type="component" value="Chromosome 4"/>
</dbReference>
<dbReference type="RNAct" id="P27612">
    <property type="molecule type" value="protein"/>
</dbReference>
<dbReference type="Bgee" id="ENSMUSG00000028577">
    <property type="expression patterns" value="Expressed in embryonic post-anal tail and 260 other cell types or tissues"/>
</dbReference>
<dbReference type="ExpressionAtlas" id="P27612">
    <property type="expression patterns" value="baseline and differential"/>
</dbReference>
<dbReference type="GO" id="GO:0005737">
    <property type="term" value="C:cytoplasm"/>
    <property type="evidence" value="ECO:0000314"/>
    <property type="project" value="UniProtKB"/>
</dbReference>
<dbReference type="GO" id="GO:0070062">
    <property type="term" value="C:extracellular exosome"/>
    <property type="evidence" value="ECO:0007669"/>
    <property type="project" value="Ensembl"/>
</dbReference>
<dbReference type="GO" id="GO:0005634">
    <property type="term" value="C:nucleus"/>
    <property type="evidence" value="ECO:0000314"/>
    <property type="project" value="UniProtKB"/>
</dbReference>
<dbReference type="GO" id="GO:0045202">
    <property type="term" value="C:synapse"/>
    <property type="evidence" value="ECO:0000314"/>
    <property type="project" value="UniProtKB"/>
</dbReference>
<dbReference type="GO" id="GO:0016005">
    <property type="term" value="F:phospholipase A2 activator activity"/>
    <property type="evidence" value="ECO:0000314"/>
    <property type="project" value="MGI"/>
</dbReference>
<dbReference type="GO" id="GO:0071222">
    <property type="term" value="P:cellular response to lipopolysaccharide"/>
    <property type="evidence" value="ECO:0000250"/>
    <property type="project" value="UniProtKB"/>
</dbReference>
<dbReference type="GO" id="GO:0006954">
    <property type="term" value="P:inflammatory response"/>
    <property type="evidence" value="ECO:0000314"/>
    <property type="project" value="MGI"/>
</dbReference>
<dbReference type="GO" id="GO:0016236">
    <property type="term" value="P:macroautophagy"/>
    <property type="evidence" value="ECO:0000250"/>
    <property type="project" value="UniProtKB"/>
</dbReference>
<dbReference type="GO" id="GO:1900045">
    <property type="term" value="P:negative regulation of protein K63-linked ubiquitination"/>
    <property type="evidence" value="ECO:0000315"/>
    <property type="project" value="UniProtKB"/>
</dbReference>
<dbReference type="GO" id="GO:0007399">
    <property type="term" value="P:nervous system development"/>
    <property type="evidence" value="ECO:0007669"/>
    <property type="project" value="UniProtKB-KW"/>
</dbReference>
<dbReference type="GO" id="GO:1903861">
    <property type="term" value="P:positive regulation of dendrite extension"/>
    <property type="evidence" value="ECO:0000315"/>
    <property type="project" value="UniProtKB"/>
</dbReference>
<dbReference type="GO" id="GO:2001224">
    <property type="term" value="P:positive regulation of neuron migration"/>
    <property type="evidence" value="ECO:0000315"/>
    <property type="project" value="UniProtKB"/>
</dbReference>
<dbReference type="GO" id="GO:0031394">
    <property type="term" value="P:positive regulation of prostaglandin biosynthetic process"/>
    <property type="evidence" value="ECO:0000315"/>
    <property type="project" value="UniProtKB"/>
</dbReference>
<dbReference type="GO" id="GO:1903423">
    <property type="term" value="P:positive regulation of synaptic vesicle recycling"/>
    <property type="evidence" value="ECO:0000315"/>
    <property type="project" value="UniProtKB"/>
</dbReference>
<dbReference type="GO" id="GO:0043162">
    <property type="term" value="P:ubiquitin-dependent protein catabolic process via the multivesicular body sorting pathway"/>
    <property type="evidence" value="ECO:0000315"/>
    <property type="project" value="UniProtKB"/>
</dbReference>
<dbReference type="CDD" id="cd00200">
    <property type="entry name" value="WD40"/>
    <property type="match status" value="1"/>
</dbReference>
<dbReference type="FunFam" id="2.130.10.10:FF:000175">
    <property type="entry name" value="Phospholipase A-2-activating protein"/>
    <property type="match status" value="1"/>
</dbReference>
<dbReference type="FunFam" id="1.25.10.10:FF:000163">
    <property type="entry name" value="Phospholipase A-2-activating protein, putative"/>
    <property type="match status" value="1"/>
</dbReference>
<dbReference type="FunFam" id="3.10.20.870:FF:000001">
    <property type="entry name" value="Phospholipase A-2-activating protein-like"/>
    <property type="match status" value="1"/>
</dbReference>
<dbReference type="Gene3D" id="1.25.10.10">
    <property type="entry name" value="Leucine-rich Repeat Variant"/>
    <property type="match status" value="1"/>
</dbReference>
<dbReference type="Gene3D" id="3.10.20.870">
    <property type="entry name" value="PFU (PLAA family ubiquitin binding), C-terminal domain"/>
    <property type="match status" value="1"/>
</dbReference>
<dbReference type="Gene3D" id="2.130.10.10">
    <property type="entry name" value="YVTN repeat-like/Quinoprotein amine dehydrogenase"/>
    <property type="match status" value="1"/>
</dbReference>
<dbReference type="InterPro" id="IPR011989">
    <property type="entry name" value="ARM-like"/>
</dbReference>
<dbReference type="InterPro" id="IPR015155">
    <property type="entry name" value="PFU"/>
</dbReference>
<dbReference type="InterPro" id="IPR038122">
    <property type="entry name" value="PFU_sf"/>
</dbReference>
<dbReference type="InterPro" id="IPR013535">
    <property type="entry name" value="PUL_dom"/>
</dbReference>
<dbReference type="InterPro" id="IPR015943">
    <property type="entry name" value="WD40/YVTN_repeat-like_dom_sf"/>
</dbReference>
<dbReference type="InterPro" id="IPR036322">
    <property type="entry name" value="WD40_repeat_dom_sf"/>
</dbReference>
<dbReference type="InterPro" id="IPR001680">
    <property type="entry name" value="WD40_rpt"/>
</dbReference>
<dbReference type="PANTHER" id="PTHR19849">
    <property type="entry name" value="PHOSPHOLIPASE A-2-ACTIVATING PROTEIN"/>
    <property type="match status" value="1"/>
</dbReference>
<dbReference type="PANTHER" id="PTHR19849:SF0">
    <property type="entry name" value="PHOSPHOLIPASE A-2-ACTIVATING PROTEIN"/>
    <property type="match status" value="1"/>
</dbReference>
<dbReference type="Pfam" id="PF09070">
    <property type="entry name" value="PFU"/>
    <property type="match status" value="1"/>
</dbReference>
<dbReference type="Pfam" id="PF08324">
    <property type="entry name" value="PUL"/>
    <property type="match status" value="1"/>
</dbReference>
<dbReference type="Pfam" id="PF00400">
    <property type="entry name" value="WD40"/>
    <property type="match status" value="7"/>
</dbReference>
<dbReference type="SMART" id="SM00320">
    <property type="entry name" value="WD40"/>
    <property type="match status" value="7"/>
</dbReference>
<dbReference type="SUPFAM" id="SSF50978">
    <property type="entry name" value="WD40 repeat-like"/>
    <property type="match status" value="1"/>
</dbReference>
<dbReference type="PROSITE" id="PS51394">
    <property type="entry name" value="PFU"/>
    <property type="match status" value="1"/>
</dbReference>
<dbReference type="PROSITE" id="PS51396">
    <property type="entry name" value="PUL"/>
    <property type="match status" value="1"/>
</dbReference>
<dbReference type="PROSITE" id="PS50082">
    <property type="entry name" value="WD_REPEATS_2"/>
    <property type="match status" value="3"/>
</dbReference>
<dbReference type="PROSITE" id="PS50294">
    <property type="entry name" value="WD_REPEATS_REGION"/>
    <property type="match status" value="1"/>
</dbReference>
<reference key="1">
    <citation type="journal article" date="2005" name="Science">
        <title>The transcriptional landscape of the mammalian genome.</title>
        <authorList>
            <person name="Carninci P."/>
            <person name="Kasukawa T."/>
            <person name="Katayama S."/>
            <person name="Gough J."/>
            <person name="Frith M.C."/>
            <person name="Maeda N."/>
            <person name="Oyama R."/>
            <person name="Ravasi T."/>
            <person name="Lenhard B."/>
            <person name="Wells C."/>
            <person name="Kodzius R."/>
            <person name="Shimokawa K."/>
            <person name="Bajic V.B."/>
            <person name="Brenner S.E."/>
            <person name="Batalov S."/>
            <person name="Forrest A.R."/>
            <person name="Zavolan M."/>
            <person name="Davis M.J."/>
            <person name="Wilming L.G."/>
            <person name="Aidinis V."/>
            <person name="Allen J.E."/>
            <person name="Ambesi-Impiombato A."/>
            <person name="Apweiler R."/>
            <person name="Aturaliya R.N."/>
            <person name="Bailey T.L."/>
            <person name="Bansal M."/>
            <person name="Baxter L."/>
            <person name="Beisel K.W."/>
            <person name="Bersano T."/>
            <person name="Bono H."/>
            <person name="Chalk A.M."/>
            <person name="Chiu K.P."/>
            <person name="Choudhary V."/>
            <person name="Christoffels A."/>
            <person name="Clutterbuck D.R."/>
            <person name="Crowe M.L."/>
            <person name="Dalla E."/>
            <person name="Dalrymple B.P."/>
            <person name="de Bono B."/>
            <person name="Della Gatta G."/>
            <person name="di Bernardo D."/>
            <person name="Down T."/>
            <person name="Engstrom P."/>
            <person name="Fagiolini M."/>
            <person name="Faulkner G."/>
            <person name="Fletcher C.F."/>
            <person name="Fukushima T."/>
            <person name="Furuno M."/>
            <person name="Futaki S."/>
            <person name="Gariboldi M."/>
            <person name="Georgii-Hemming P."/>
            <person name="Gingeras T.R."/>
            <person name="Gojobori T."/>
            <person name="Green R.E."/>
            <person name="Gustincich S."/>
            <person name="Harbers M."/>
            <person name="Hayashi Y."/>
            <person name="Hensch T.K."/>
            <person name="Hirokawa N."/>
            <person name="Hill D."/>
            <person name="Huminiecki L."/>
            <person name="Iacono M."/>
            <person name="Ikeo K."/>
            <person name="Iwama A."/>
            <person name="Ishikawa T."/>
            <person name="Jakt M."/>
            <person name="Kanapin A."/>
            <person name="Katoh M."/>
            <person name="Kawasawa Y."/>
            <person name="Kelso J."/>
            <person name="Kitamura H."/>
            <person name="Kitano H."/>
            <person name="Kollias G."/>
            <person name="Krishnan S.P."/>
            <person name="Kruger A."/>
            <person name="Kummerfeld S.K."/>
            <person name="Kurochkin I.V."/>
            <person name="Lareau L.F."/>
            <person name="Lazarevic D."/>
            <person name="Lipovich L."/>
            <person name="Liu J."/>
            <person name="Liuni S."/>
            <person name="McWilliam S."/>
            <person name="Madan Babu M."/>
            <person name="Madera M."/>
            <person name="Marchionni L."/>
            <person name="Matsuda H."/>
            <person name="Matsuzawa S."/>
            <person name="Miki H."/>
            <person name="Mignone F."/>
            <person name="Miyake S."/>
            <person name="Morris K."/>
            <person name="Mottagui-Tabar S."/>
            <person name="Mulder N."/>
            <person name="Nakano N."/>
            <person name="Nakauchi H."/>
            <person name="Ng P."/>
            <person name="Nilsson R."/>
            <person name="Nishiguchi S."/>
            <person name="Nishikawa S."/>
            <person name="Nori F."/>
            <person name="Ohara O."/>
            <person name="Okazaki Y."/>
            <person name="Orlando V."/>
            <person name="Pang K.C."/>
            <person name="Pavan W.J."/>
            <person name="Pavesi G."/>
            <person name="Pesole G."/>
            <person name="Petrovsky N."/>
            <person name="Piazza S."/>
            <person name="Reed J."/>
            <person name="Reid J.F."/>
            <person name="Ring B.Z."/>
            <person name="Ringwald M."/>
            <person name="Rost B."/>
            <person name="Ruan Y."/>
            <person name="Salzberg S.L."/>
            <person name="Sandelin A."/>
            <person name="Schneider C."/>
            <person name="Schoenbach C."/>
            <person name="Sekiguchi K."/>
            <person name="Semple C.A."/>
            <person name="Seno S."/>
            <person name="Sessa L."/>
            <person name="Sheng Y."/>
            <person name="Shibata Y."/>
            <person name="Shimada H."/>
            <person name="Shimada K."/>
            <person name="Silva D."/>
            <person name="Sinclair B."/>
            <person name="Sperling S."/>
            <person name="Stupka E."/>
            <person name="Sugiura K."/>
            <person name="Sultana R."/>
            <person name="Takenaka Y."/>
            <person name="Taki K."/>
            <person name="Tammoja K."/>
            <person name="Tan S.L."/>
            <person name="Tang S."/>
            <person name="Taylor M.S."/>
            <person name="Tegner J."/>
            <person name="Teichmann S.A."/>
            <person name="Ueda H.R."/>
            <person name="van Nimwegen E."/>
            <person name="Verardo R."/>
            <person name="Wei C.L."/>
            <person name="Yagi K."/>
            <person name="Yamanishi H."/>
            <person name="Zabarovsky E."/>
            <person name="Zhu S."/>
            <person name="Zimmer A."/>
            <person name="Hide W."/>
            <person name="Bult C."/>
            <person name="Grimmond S.M."/>
            <person name="Teasdale R.D."/>
            <person name="Liu E.T."/>
            <person name="Brusic V."/>
            <person name="Quackenbush J."/>
            <person name="Wahlestedt C."/>
            <person name="Mattick J.S."/>
            <person name="Hume D.A."/>
            <person name="Kai C."/>
            <person name="Sasaki D."/>
            <person name="Tomaru Y."/>
            <person name="Fukuda S."/>
            <person name="Kanamori-Katayama M."/>
            <person name="Suzuki M."/>
            <person name="Aoki J."/>
            <person name="Arakawa T."/>
            <person name="Iida J."/>
            <person name="Imamura K."/>
            <person name="Itoh M."/>
            <person name="Kato T."/>
            <person name="Kawaji H."/>
            <person name="Kawagashira N."/>
            <person name="Kawashima T."/>
            <person name="Kojima M."/>
            <person name="Kondo S."/>
            <person name="Konno H."/>
            <person name="Nakano K."/>
            <person name="Ninomiya N."/>
            <person name="Nishio T."/>
            <person name="Okada M."/>
            <person name="Plessy C."/>
            <person name="Shibata K."/>
            <person name="Shiraki T."/>
            <person name="Suzuki S."/>
            <person name="Tagami M."/>
            <person name="Waki K."/>
            <person name="Watahiki A."/>
            <person name="Okamura-Oho Y."/>
            <person name="Suzuki H."/>
            <person name="Kawai J."/>
            <person name="Hayashizaki Y."/>
        </authorList>
    </citation>
    <scope>NUCLEOTIDE SEQUENCE [LARGE SCALE MRNA]</scope>
    <source>
        <strain>C57BL/6J</strain>
    </source>
</reference>
<reference key="2">
    <citation type="journal article" date="2009" name="PLoS Biol.">
        <title>Lineage-specific biology revealed by a finished genome assembly of the mouse.</title>
        <authorList>
            <person name="Church D.M."/>
            <person name="Goodstadt L."/>
            <person name="Hillier L.W."/>
            <person name="Zody M.C."/>
            <person name="Goldstein S."/>
            <person name="She X."/>
            <person name="Bult C.J."/>
            <person name="Agarwala R."/>
            <person name="Cherry J.L."/>
            <person name="DiCuccio M."/>
            <person name="Hlavina W."/>
            <person name="Kapustin Y."/>
            <person name="Meric P."/>
            <person name="Maglott D."/>
            <person name="Birtle Z."/>
            <person name="Marques A.C."/>
            <person name="Graves T."/>
            <person name="Zhou S."/>
            <person name="Teague B."/>
            <person name="Potamousis K."/>
            <person name="Churas C."/>
            <person name="Place M."/>
            <person name="Herschleb J."/>
            <person name="Runnheim R."/>
            <person name="Forrest D."/>
            <person name="Amos-Landgraf J."/>
            <person name="Schwartz D.C."/>
            <person name="Cheng Z."/>
            <person name="Lindblad-Toh K."/>
            <person name="Eichler E.E."/>
            <person name="Ponting C.P."/>
        </authorList>
    </citation>
    <scope>NUCLEOTIDE SEQUENCE [LARGE SCALE GENOMIC DNA]</scope>
    <source>
        <strain>C57BL/6J</strain>
    </source>
</reference>
<reference key="3">
    <citation type="submission" date="2005-09" db="EMBL/GenBank/DDBJ databases">
        <authorList>
            <person name="Mural R.J."/>
            <person name="Adams M.D."/>
            <person name="Myers E.W."/>
            <person name="Smith H.O."/>
            <person name="Venter J.C."/>
        </authorList>
    </citation>
    <scope>NUCLEOTIDE SEQUENCE [LARGE SCALE GENOMIC DNA]</scope>
</reference>
<reference key="4">
    <citation type="journal article" date="2004" name="Genome Res.">
        <title>The status, quality, and expansion of the NIH full-length cDNA project: the Mammalian Gene Collection (MGC).</title>
        <authorList>
            <consortium name="The MGC Project Team"/>
        </authorList>
    </citation>
    <scope>NUCLEOTIDE SEQUENCE [LARGE SCALE MRNA]</scope>
    <source>
        <tissue>Brain</tissue>
    </source>
</reference>
<reference key="5">
    <citation type="journal article" date="1991" name="Proc. Natl. Acad. Sci. U.S.A.">
        <title>Cloning of a phospholipase A2-activating protein.</title>
        <authorList>
            <person name="Clark M.A."/>
            <person name="Oezguer L.E."/>
            <person name="Conway T.M."/>
            <person name="Dispoto J."/>
            <person name="Crooke S.T."/>
            <person name="Bomalaski J.S."/>
        </authorList>
    </citation>
    <scope>NUCLEOTIDE SEQUENCE [MRNA] OF 1-312</scope>
    <scope>INDUCTION</scope>
</reference>
<reference key="6">
    <citation type="journal article" date="1995" name="Gene">
        <title>Cloning of a rat cDNA encoding a protein with high homology to mouse phospholipase A2-activating protein.</title>
        <authorList>
            <person name="Wang H."/>
            <person name="Lemasters J.J."/>
            <person name="Herman B."/>
        </authorList>
    </citation>
    <scope>SEQUENCE REVISION</scope>
</reference>
<reference key="7">
    <citation type="journal article" date="2010" name="Cell">
        <title>A tissue-specific atlas of mouse protein phosphorylation and expression.</title>
        <authorList>
            <person name="Huttlin E.L."/>
            <person name="Jedrychowski M.P."/>
            <person name="Elias J.E."/>
            <person name="Goswami T."/>
            <person name="Rad R."/>
            <person name="Beausoleil S.A."/>
            <person name="Villen J."/>
            <person name="Haas W."/>
            <person name="Sowa M.E."/>
            <person name="Gygi S.P."/>
        </authorList>
    </citation>
    <scope>IDENTIFICATION BY MASS SPECTROMETRY [LARGE SCALE ANALYSIS]</scope>
    <source>
        <tissue>Brain</tissue>
        <tissue>Brown adipose tissue</tissue>
        <tissue>Heart</tissue>
        <tissue>Kidney</tissue>
        <tissue>Liver</tissue>
        <tissue>Lung</tissue>
        <tissue>Pancreas</tissue>
        <tissue>Spleen</tissue>
        <tissue>Testis</tissue>
    </source>
</reference>
<reference key="8">
    <citation type="journal article" date="2013" name="Mol. Cell">
        <title>SIRT5-mediated lysine desuccinylation impacts diverse metabolic pathways.</title>
        <authorList>
            <person name="Park J."/>
            <person name="Chen Y."/>
            <person name="Tishkoff D.X."/>
            <person name="Peng C."/>
            <person name="Tan M."/>
            <person name="Dai L."/>
            <person name="Xie Z."/>
            <person name="Zhang Y."/>
            <person name="Zwaans B.M."/>
            <person name="Skinner M.E."/>
            <person name="Lombard D.B."/>
            <person name="Zhao Y."/>
        </authorList>
    </citation>
    <scope>ACETYLATION [LARGE SCALE ANALYSIS] AT LYS-529</scope>
    <scope>IDENTIFICATION BY MASS SPECTROMETRY [LARGE SCALE ANALYSIS]</scope>
    <source>
        <tissue>Embryonic fibroblast</tissue>
    </source>
</reference>
<reference key="9">
    <citation type="journal article" date="2017" name="Am. J. Hum. Genet.">
        <title>PLAA mutations cause a lethal infantile epileptic encephalopathy by disrupting ubiquitin-mediated endolysosomal degradation of synaptic proteins.</title>
        <authorList>
            <person name="Hall E.A."/>
            <person name="Nahorski M.S."/>
            <person name="Murray L.M."/>
            <person name="Shaheen R."/>
            <person name="Perkins E."/>
            <person name="Dissanayake K.N."/>
            <person name="Kristaryanto Y."/>
            <person name="Jones R.A."/>
            <person name="Vogt J."/>
            <person name="Rivagorda M."/>
            <person name="Handley M.T."/>
            <person name="Mali G.R."/>
            <person name="Quidwai T."/>
            <person name="Soares D.C."/>
            <person name="Keighren M.A."/>
            <person name="McKie L."/>
            <person name="Mort R.L."/>
            <person name="Gammoh N."/>
            <person name="Garcia-Munoz A."/>
            <person name="Davey T."/>
            <person name="Vermeren M."/>
            <person name="Walsh D."/>
            <person name="Budd P."/>
            <person name="Aligianis I.A."/>
            <person name="Faqeih E."/>
            <person name="Quigley A.J."/>
            <person name="Jackson I.J."/>
            <person name="Kulathu Y."/>
            <person name="Jackson M."/>
            <person name="Ribchester R.R."/>
            <person name="von Kriegsheim A."/>
            <person name="Alkuraya F.S."/>
            <person name="Woods C.G."/>
            <person name="Maher E.R."/>
            <person name="Mill P."/>
        </authorList>
    </citation>
    <scope>FUNCTION</scope>
    <scope>SUBCELLULAR LOCATION</scope>
    <scope>TISSUE SPECIFICITY</scope>
    <scope>DEVELOPMENTAL STAGE</scope>
    <scope>DISRUPTION PHENOTYPE</scope>
    <scope>MUTAGENESIS OF GLY-23</scope>
</reference>
<reference key="10">
    <citation type="journal article" date="2017" name="Brain">
        <title>Phospholipase A2-activating protein is associated with a novel form of leukoencephalopathy.</title>
        <authorList>
            <person name="Falik Zaccai T.C."/>
            <person name="Savitzki D."/>
            <person name="Zivony-Elboum Y."/>
            <person name="Vilboux T."/>
            <person name="Fitts E.C."/>
            <person name="Shoval Y."/>
            <person name="Kalfon L."/>
            <person name="Samra N."/>
            <person name="Keren Z."/>
            <person name="Gross B."/>
            <person name="Chasnyk N."/>
            <person name="Straussberg R."/>
            <person name="Mullikin J.C."/>
            <person name="Teer J.K."/>
            <person name="Geiger D."/>
            <person name="Kornitzer D."/>
            <person name="Bitterman-Deutsch O."/>
            <person name="Samson A.O."/>
            <person name="Wakamiya M."/>
            <person name="Peterson J.W."/>
            <person name="Kirtley M.L."/>
            <person name="Pinchuk I.V."/>
            <person name="Baze W.B."/>
            <person name="Gahl W.A."/>
            <person name="Kleta R."/>
            <person name="Anikster Y."/>
            <person name="Chopra A.K."/>
        </authorList>
    </citation>
    <scope>FUNCTION</scope>
    <scope>DISRUPTION PHENOTYPE</scope>
</reference>
<proteinExistence type="evidence at protein level"/>
<sequence length="794" mass="87221">MASGASRYRLSCSLPGHELDVRGLVCCLYPPGAFVSVSRDRTTRLWAPDSPNRGFTEMHCMSGHSNFVSCVCIIPSSDIYPHGLIATGGNDHNICIFSLDSPMPLYILKGHKDTVCSLSSGKFGTLLSGSWDTTAKVWLNDKCMMTLQGHTAAVWAVKILPEQGLMLTGSADKTIKLWKAGRCERTFLGHEDCVRGLAILSETEFLSCANDASIRRWQITGECLEVYFGHTNYIYSISVFPNSKDFVTTAEDRSLRIWKHGECAQTIRLPAQSIWCCCVLENGDIVVGASDGIIRVFTESEERTASAEEIKAFERELSQATIDSKTGDLGDINAEQLPGREHLSEPGTREGQTRLIRDGERVEAYQWSVSDGRWIKIGDVVGSSGANQQTSGKVLYEGKEFDYVFSIDVNEGGPSYKLPYNVSDDPWLVAYNFLQKNDLNPMFLDQVAKFIIDNTKGQTLGLGNTSFSDPFTGGGRYVPGTSGPSNTVQTADPFTGAGRYMPGSAGMDTTMTGVDPFTGNSAYRSAASKTVNIYFPKKEALTFDQANPTQILGKLKELNGTAPEEKKLTEDDLVLLEKILSLICNNSSEKPTAQQLQILWKAINWPEDIVFPALDILRLSIKHPNVNENFCNEKGDQFSSHLINLLNPKGKPANQLLALRTFCNCFVSQAGQKLMMSQRESLMSHAIELKSGSNKNIHIALATLTLNYSVCFHKDHNIEGKAQCLSVISTILEVVQDLEATFRLLVALGTLISDDSNAIQLAKSLGVDSQIKKYVSVSEPAKVSECCRLVLHLL</sequence>
<organism>
    <name type="scientific">Mus musculus</name>
    <name type="common">Mouse</name>
    <dbReference type="NCBI Taxonomy" id="10090"/>
    <lineage>
        <taxon>Eukaryota</taxon>
        <taxon>Metazoa</taxon>
        <taxon>Chordata</taxon>
        <taxon>Craniata</taxon>
        <taxon>Vertebrata</taxon>
        <taxon>Euteleostomi</taxon>
        <taxon>Mammalia</taxon>
        <taxon>Eutheria</taxon>
        <taxon>Euarchontoglires</taxon>
        <taxon>Glires</taxon>
        <taxon>Rodentia</taxon>
        <taxon>Myomorpha</taxon>
        <taxon>Muroidea</taxon>
        <taxon>Muridae</taxon>
        <taxon>Murinae</taxon>
        <taxon>Mus</taxon>
        <taxon>Mus</taxon>
    </lineage>
</organism>
<accession>P27612</accession>
<accession>A4QPD6</accession>
<accession>Q8C6C4</accession>
<comment type="function">
    <text evidence="1 5 6">Plays a role in protein ubiquitination, sorting and degradation through its association with VCP (By similarity). Involved in ubiquitin-mediated membrane proteins trafficking to late endosomes in an ESCRT-dependent manner, and hence plays a role in synaptic vesicle recycling (PubMed:28413018). May play a role in macroautophagy, regulating for instance the clearance of damaged lysosomes (By similarity). Plays a role in cerebellar Purkinje cell development (PubMed:28413018). Positively regulates cytosolic and calcium-independent phospholipase A2 activities in a tumor necrosis factor alpha (TNF-alpha)- or lipopolysaccharide (LPS)-dependent manner, and hence prostaglandin E2 biosynthesis (PubMed:28007986).</text>
</comment>
<comment type="subunit">
    <text evidence="1">Interacts with ubiquitin. Interacts with UBXN6, VCP and YOD1; may form a complex involved in macroautophagy.</text>
</comment>
<comment type="subcellular location">
    <subcellularLocation>
        <location evidence="6">Nucleus</location>
    </subcellularLocation>
    <subcellularLocation>
        <location evidence="6">Cytoplasm</location>
    </subcellularLocation>
    <subcellularLocation>
        <location evidence="6">Synapse</location>
    </subcellularLocation>
    <text evidence="1">Recruited to damaged lysosomes decorated with K48-linked ubiquitin chains.</text>
</comment>
<comment type="tissue specificity">
    <text evidence="6">Expressed in the brain, with highest levels in hippocampal neurons, cerebellar granular cell layer and Purkinje cells (PubMed:28413018).</text>
</comment>
<comment type="developmental stage">
    <text evidence="6">At stage 11.5 dpc ubiquitously expressed (PubMed:28413018).</text>
</comment>
<comment type="induction">
    <text evidence="4">In smooth muscle and endothelial cells by leukotriene D4, by tumor necrosis factor in endothelial cells and by uric acid crystals in macrophages.</text>
</comment>
<comment type="domain">
    <text evidence="1">The PUL domain is composed of 6 armadillo-like repeats and mediates the interaction with VCP C-terminus.</text>
</comment>
<comment type="domain">
    <text evidence="1">The PFU domain mediates interaction with ubiquitin.</text>
</comment>
<comment type="disruption phenotype">
    <text evidence="5 6">Mice die perinatally and exhibit spleen, lung and brain developmental anomalies (PubMed:28007986, PubMed:28413018). Display less matured and differentiated embryonic cortical neurons (PubMed:28007986). Display reduced ubiquitin-dependent membrane protein trafficking from early to late endosomes (PubMed:28413018). Show reduced prostaglandin E2 biosynthesis in embryonic brain, lung and heart, but not in liver at 18 dpc (PubMed:28007986).</text>
</comment>
<comment type="similarity">
    <text evidence="7">Belongs to the WD repeat PLAP family.</text>
</comment>
<comment type="sequence caution" evidence="7">
    <conflict type="miscellaneous discrepancy">
        <sequence resource="EMBL-CDS" id="AAA39943"/>
    </conflict>
    <text>Several frameshifts and contaminating sequence.</text>
</comment>
<comment type="sequence caution" evidence="7">
    <conflict type="frameshift" ref="3"/>
</comment>
<keyword id="KW-0007">Acetylation</keyword>
<keyword id="KW-0963">Cytoplasm</keyword>
<keyword id="KW-0217">Developmental protein</keyword>
<keyword id="KW-0524">Neurogenesis</keyword>
<keyword id="KW-0539">Nucleus</keyword>
<keyword id="KW-0597">Phosphoprotein</keyword>
<keyword id="KW-1185">Reference proteome</keyword>
<keyword id="KW-0677">Repeat</keyword>
<keyword id="KW-0770">Synapse</keyword>
<keyword id="KW-0853">WD repeat</keyword>
<gene>
    <name type="primary">Plaa</name>
    <name type="synonym">Plap</name>
</gene>